<dbReference type="EMBL" id="FO080722">
    <property type="protein sequence ID" value="CCD66158.1"/>
    <property type="molecule type" value="Genomic_DNA"/>
</dbReference>
<dbReference type="PIR" id="S44783">
    <property type="entry name" value="S44783"/>
</dbReference>
<dbReference type="RefSeq" id="NP_498869.1">
    <property type="nucleotide sequence ID" value="NM_066468.5"/>
</dbReference>
<dbReference type="SMR" id="Q04908"/>
<dbReference type="BioGRID" id="41400">
    <property type="interactions" value="69"/>
</dbReference>
<dbReference type="DIP" id="DIP-25350N"/>
<dbReference type="FunCoup" id="Q04908">
    <property type="interactions" value="2902"/>
</dbReference>
<dbReference type="IntAct" id="Q04908">
    <property type="interactions" value="4"/>
</dbReference>
<dbReference type="STRING" id="6239.C30C11.2.1"/>
<dbReference type="PaxDb" id="6239-C30C11.2"/>
<dbReference type="PeptideAtlas" id="Q04908"/>
<dbReference type="EnsemblMetazoa" id="C30C11.2.1">
    <property type="protein sequence ID" value="C30C11.2.1"/>
    <property type="gene ID" value="WBGene00004460"/>
</dbReference>
<dbReference type="GeneID" id="176196"/>
<dbReference type="KEGG" id="cel:CELE_C30C11.2"/>
<dbReference type="UCSC" id="C30C11.2">
    <property type="organism name" value="c. elegans"/>
</dbReference>
<dbReference type="AGR" id="WB:WBGene00004460"/>
<dbReference type="CTD" id="176196"/>
<dbReference type="WormBase" id="C30C11.2">
    <property type="protein sequence ID" value="CE00101"/>
    <property type="gene ID" value="WBGene00004460"/>
    <property type="gene designation" value="rpn-3"/>
</dbReference>
<dbReference type="eggNOG" id="KOG2581">
    <property type="taxonomic scope" value="Eukaryota"/>
</dbReference>
<dbReference type="GeneTree" id="ENSGT00940000153653"/>
<dbReference type="HOGENOM" id="CLU_019858_1_2_1"/>
<dbReference type="InParanoid" id="Q04908"/>
<dbReference type="OMA" id="AKVYFYF"/>
<dbReference type="OrthoDB" id="1713558at2759"/>
<dbReference type="PhylomeDB" id="Q04908"/>
<dbReference type="Reactome" id="R-CEL-1234176">
    <property type="pathway name" value="Oxygen-dependent proline hydroxylation of Hypoxia-inducible Factor Alpha"/>
</dbReference>
<dbReference type="Reactome" id="R-CEL-1236978">
    <property type="pathway name" value="Cross-presentation of soluble exogenous antigens (endosomes)"/>
</dbReference>
<dbReference type="Reactome" id="R-CEL-187577">
    <property type="pathway name" value="SCF(Skp2)-mediated degradation of p27/p21"/>
</dbReference>
<dbReference type="Reactome" id="R-CEL-195253">
    <property type="pathway name" value="Degradation of beta-catenin by the destruction complex"/>
</dbReference>
<dbReference type="Reactome" id="R-CEL-349425">
    <property type="pathway name" value="Autodegradation of the E3 ubiquitin ligase COP1"/>
</dbReference>
<dbReference type="Reactome" id="R-CEL-350562">
    <property type="pathway name" value="Regulation of ornithine decarboxylase (ODC)"/>
</dbReference>
<dbReference type="Reactome" id="R-CEL-382556">
    <property type="pathway name" value="ABC-family proteins mediated transport"/>
</dbReference>
<dbReference type="Reactome" id="R-CEL-4608870">
    <property type="pathway name" value="Asymmetric localization of PCP proteins"/>
</dbReference>
<dbReference type="Reactome" id="R-CEL-4641258">
    <property type="pathway name" value="Degradation of DVL"/>
</dbReference>
<dbReference type="Reactome" id="R-CEL-5632684">
    <property type="pathway name" value="Hedgehog 'on' state"/>
</dbReference>
<dbReference type="Reactome" id="R-CEL-5687128">
    <property type="pathway name" value="MAPK6/MAPK4 signaling"/>
</dbReference>
<dbReference type="Reactome" id="R-CEL-5689603">
    <property type="pathway name" value="UCH proteinases"/>
</dbReference>
<dbReference type="Reactome" id="R-CEL-5689880">
    <property type="pathway name" value="Ub-specific processing proteases"/>
</dbReference>
<dbReference type="Reactome" id="R-CEL-6798695">
    <property type="pathway name" value="Neutrophil degranulation"/>
</dbReference>
<dbReference type="Reactome" id="R-CEL-68949">
    <property type="pathway name" value="Orc1 removal from chromatin"/>
</dbReference>
<dbReference type="Reactome" id="R-CEL-69017">
    <property type="pathway name" value="CDK-mediated phosphorylation and removal of Cdc6"/>
</dbReference>
<dbReference type="Reactome" id="R-CEL-69601">
    <property type="pathway name" value="Ubiquitin Mediated Degradation of Phosphorylated Cdc25A"/>
</dbReference>
<dbReference type="Reactome" id="R-CEL-75815">
    <property type="pathway name" value="Ubiquitin-dependent degradation of Cyclin D"/>
</dbReference>
<dbReference type="Reactome" id="R-CEL-8854050">
    <property type="pathway name" value="FBXL7 down-regulates AURKA during mitotic entry and in early mitosis"/>
</dbReference>
<dbReference type="Reactome" id="R-CEL-8939902">
    <property type="pathway name" value="Regulation of RUNX2 expression and activity"/>
</dbReference>
<dbReference type="Reactome" id="R-CEL-8941858">
    <property type="pathway name" value="Regulation of RUNX3 expression and activity"/>
</dbReference>
<dbReference type="Reactome" id="R-CEL-8948751">
    <property type="pathway name" value="Regulation of PTEN stability and activity"/>
</dbReference>
<dbReference type="Reactome" id="R-CEL-8951664">
    <property type="pathway name" value="Neddylation"/>
</dbReference>
<dbReference type="Reactome" id="R-CEL-9755511">
    <property type="pathway name" value="KEAP1-NFE2L2 pathway"/>
</dbReference>
<dbReference type="Reactome" id="R-CEL-9762114">
    <property type="pathway name" value="GSK3B and BTRC:CUL1-mediated-degradation of NFE2L2"/>
</dbReference>
<dbReference type="Reactome" id="R-CEL-983168">
    <property type="pathway name" value="Antigen processing: Ubiquitination &amp; Proteasome degradation"/>
</dbReference>
<dbReference type="Reactome" id="R-CEL-9907900">
    <property type="pathway name" value="Proteasome assembly"/>
</dbReference>
<dbReference type="PRO" id="PR:Q04908"/>
<dbReference type="Proteomes" id="UP000001940">
    <property type="component" value="Chromosome III"/>
</dbReference>
<dbReference type="Bgee" id="WBGene00004460">
    <property type="expression patterns" value="Expressed in germ line (C elegans) and 4 other cell types or tissues"/>
</dbReference>
<dbReference type="GO" id="GO:0008541">
    <property type="term" value="C:proteasome regulatory particle, lid subcomplex"/>
    <property type="evidence" value="ECO:0000318"/>
    <property type="project" value="GO_Central"/>
</dbReference>
<dbReference type="GO" id="GO:0030234">
    <property type="term" value="F:enzyme regulator activity"/>
    <property type="evidence" value="ECO:0007669"/>
    <property type="project" value="InterPro"/>
</dbReference>
<dbReference type="GO" id="GO:0010623">
    <property type="term" value="P:programmed cell death involved in cell development"/>
    <property type="evidence" value="ECO:0000315"/>
    <property type="project" value="UniProtKB"/>
</dbReference>
<dbReference type="GO" id="GO:0042176">
    <property type="term" value="P:regulation of protein catabolic process"/>
    <property type="evidence" value="ECO:0007669"/>
    <property type="project" value="InterPro"/>
</dbReference>
<dbReference type="GO" id="GO:0006511">
    <property type="term" value="P:ubiquitin-dependent protein catabolic process"/>
    <property type="evidence" value="ECO:0000318"/>
    <property type="project" value="GO_Central"/>
</dbReference>
<dbReference type="InterPro" id="IPR013586">
    <property type="entry name" value="26S_Psome_reg_C"/>
</dbReference>
<dbReference type="InterPro" id="IPR050756">
    <property type="entry name" value="CSN3"/>
</dbReference>
<dbReference type="InterPro" id="IPR000717">
    <property type="entry name" value="PCI_dom"/>
</dbReference>
<dbReference type="InterPro" id="IPR036390">
    <property type="entry name" value="WH_DNA-bd_sf"/>
</dbReference>
<dbReference type="PANTHER" id="PTHR10758:SF2">
    <property type="entry name" value="26S PROTEASOME NON-ATPASE REGULATORY SUBUNIT 3"/>
    <property type="match status" value="1"/>
</dbReference>
<dbReference type="PANTHER" id="PTHR10758">
    <property type="entry name" value="26S PROTEASOME NON-ATPASE REGULATORY SUBUNIT 3/COP9 SIGNALOSOME COMPLEX SUBUNIT 3"/>
    <property type="match status" value="1"/>
</dbReference>
<dbReference type="Pfam" id="PF01399">
    <property type="entry name" value="PCI"/>
    <property type="match status" value="1"/>
</dbReference>
<dbReference type="Pfam" id="PF08375">
    <property type="entry name" value="Rpn3_C"/>
    <property type="match status" value="1"/>
</dbReference>
<dbReference type="SMART" id="SM00753">
    <property type="entry name" value="PAM"/>
    <property type="match status" value="1"/>
</dbReference>
<dbReference type="SMART" id="SM00088">
    <property type="entry name" value="PINT"/>
    <property type="match status" value="1"/>
</dbReference>
<dbReference type="SUPFAM" id="SSF46785">
    <property type="entry name" value="Winged helix' DNA-binding domain"/>
    <property type="match status" value="1"/>
</dbReference>
<dbReference type="PROSITE" id="PS50250">
    <property type="entry name" value="PCI"/>
    <property type="match status" value="1"/>
</dbReference>
<accession>Q04908</accession>
<organism>
    <name type="scientific">Caenorhabditis elegans</name>
    <dbReference type="NCBI Taxonomy" id="6239"/>
    <lineage>
        <taxon>Eukaryota</taxon>
        <taxon>Metazoa</taxon>
        <taxon>Ecdysozoa</taxon>
        <taxon>Nematoda</taxon>
        <taxon>Chromadorea</taxon>
        <taxon>Rhabditida</taxon>
        <taxon>Rhabditina</taxon>
        <taxon>Rhabditomorpha</taxon>
        <taxon>Rhabditoidea</taxon>
        <taxon>Rhabditidae</taxon>
        <taxon>Peloderinae</taxon>
        <taxon>Caenorhabditis</taxon>
    </lineage>
</organism>
<sequence length="504" mass="57507">MAPKTGETVVEKMEVDEAKQDVPATEPAKDLNAIAVENIKEQLAALDKGEEHLITRVLQVLPKTRKQINDNVLYKLVSSHLSSDAQFAEGMLKYLHYTPAADTEVQPMDTSNVKTKSPKKGVKPVFASPESDCYLRLLVLLHLYAQKKNTEALALGENQLTSIYNFDRRTLDGLAAKTLYFLCVIYEREGRLFDHQGFLNSRLRTATLRNFSESQAVLICWLLRCYLINRQYQSAAHLVSKVAFPDNASNNDLARYMYYQGRIKALQLDYNSAAGYFLQAQRKAPQEGAIGFKQAVQKWVVVIGLLQGEIPDRSVFRQPIYRKCLAHYLDLSRGVRDGDVARFNHNLEQFKTQFEADDTLTLIVRLRQNVIKTAIKQISLAYSRIYIKDIAKKLYITNETETEYIVAKAIADGAIDAVITSDVRDGPRYMQSSETADIYRTSEPQAHFDTRIRYCLELHNQAVKALRYPPKKKIAVETIEQAREREQQELEFAKELADEDDDDF</sequence>
<name>PSMD3_CAEEL</name>
<protein>
    <recommendedName>
        <fullName>26S proteasome non-ATPase regulatory subunit 3</fullName>
    </recommendedName>
    <alternativeName>
        <fullName>26S proteasome regulatory subunit rpn-3</fullName>
    </alternativeName>
</protein>
<evidence type="ECO:0000250" key="1"/>
<evidence type="ECO:0000255" key="2">
    <source>
        <dbReference type="PROSITE-ProRule" id="PRU01185"/>
    </source>
</evidence>
<evidence type="ECO:0000305" key="3"/>
<comment type="function">
    <text evidence="1">Acts as a regulatory subunit of the 26 proteasome which is involved in the ATP-dependent degradation of ubiquitinated proteins.</text>
</comment>
<comment type="subunit">
    <text evidence="1">The 26S proteasome is composed of a core protease, known as the 20S proteasome, capped at one or both ends by the 19S regulatory complex (RC). The RC is composed of at least 18 different subunits in two subcomplexes, the base and the lid, which form the portions proximal and distal to the 20S proteolytic core, respectively (By similarity).</text>
</comment>
<comment type="interaction">
    <interactant intactId="EBI-312239">
        <id>Q04908</id>
    </interactant>
    <interactant intactId="EBI-312245">
        <id>Q95Y72</id>
        <label>dss-1</label>
    </interactant>
    <organismsDiffer>false</organismsDiffer>
    <experiments>2</experiments>
</comment>
<comment type="similarity">
    <text evidence="3">Belongs to the proteasome subunit S3 family.</text>
</comment>
<keyword id="KW-0647">Proteasome</keyword>
<keyword id="KW-1185">Reference proteome</keyword>
<feature type="chain" id="PRO_0000173818" description="26S proteasome non-ATPase regulatory subunit 3">
    <location>
        <begin position="1"/>
        <end position="504"/>
    </location>
</feature>
<feature type="domain" description="PCI" evidence="2">
    <location>
        <begin position="254"/>
        <end position="433"/>
    </location>
</feature>
<proteinExistence type="evidence at protein level"/>
<reference key="1">
    <citation type="journal article" date="1994" name="Nature">
        <title>2.2 Mb of contiguous nucleotide sequence from chromosome III of C. elegans.</title>
        <authorList>
            <person name="Wilson R."/>
            <person name="Ainscough R."/>
            <person name="Anderson K."/>
            <person name="Baynes C."/>
            <person name="Berks M."/>
            <person name="Bonfield J."/>
            <person name="Burton J."/>
            <person name="Connell M."/>
            <person name="Copsey T."/>
            <person name="Cooper J."/>
            <person name="Coulson A."/>
            <person name="Craxton M."/>
            <person name="Dear S."/>
            <person name="Du Z."/>
            <person name="Durbin R."/>
            <person name="Favello A."/>
            <person name="Fraser A."/>
            <person name="Fulton L."/>
            <person name="Gardner A."/>
            <person name="Green P."/>
            <person name="Hawkins T."/>
            <person name="Hillier L."/>
            <person name="Jier M."/>
            <person name="Johnston L."/>
            <person name="Jones M."/>
            <person name="Kershaw J."/>
            <person name="Kirsten J."/>
            <person name="Laisster N."/>
            <person name="Latreille P."/>
            <person name="Lightning J."/>
            <person name="Lloyd C."/>
            <person name="Mortimore B."/>
            <person name="O'Callaghan M."/>
            <person name="Parsons J."/>
            <person name="Percy C."/>
            <person name="Rifken L."/>
            <person name="Roopra A."/>
            <person name="Saunders D."/>
            <person name="Shownkeen R."/>
            <person name="Sims M."/>
            <person name="Smaldon N."/>
            <person name="Smith A."/>
            <person name="Smith M."/>
            <person name="Sonnhammer E."/>
            <person name="Staden R."/>
            <person name="Sulston J."/>
            <person name="Thierry-Mieg J."/>
            <person name="Thomas K."/>
            <person name="Vaudin M."/>
            <person name="Vaughan K."/>
            <person name="Waterston R."/>
            <person name="Watson A."/>
            <person name="Weinstock L."/>
            <person name="Wilkinson-Sproat J."/>
            <person name="Wohldman P."/>
        </authorList>
    </citation>
    <scope>NUCLEOTIDE SEQUENCE [LARGE SCALE GENOMIC DNA]</scope>
    <source>
        <strain>Bristol N2</strain>
    </source>
</reference>
<reference key="2">
    <citation type="journal article" date="1998" name="Science">
        <title>Genome sequence of the nematode C. elegans: a platform for investigating biology.</title>
        <authorList>
            <consortium name="The C. elegans sequencing consortium"/>
        </authorList>
    </citation>
    <scope>NUCLEOTIDE SEQUENCE [LARGE SCALE GENOMIC DNA]</scope>
    <source>
        <strain>Bristol N2</strain>
    </source>
</reference>
<gene>
    <name type="primary">rpn-3</name>
    <name type="ORF">C30C11.2</name>
</gene>